<reference key="1">
    <citation type="journal article" date="2003" name="Science">
        <title>Genome of Geobacter sulfurreducens: metal reduction in subsurface environments.</title>
        <authorList>
            <person name="Methe B.A."/>
            <person name="Nelson K.E."/>
            <person name="Eisen J.A."/>
            <person name="Paulsen I.T."/>
            <person name="Nelson W.C."/>
            <person name="Heidelberg J.F."/>
            <person name="Wu D."/>
            <person name="Wu M."/>
            <person name="Ward N.L."/>
            <person name="Beanan M.J."/>
            <person name="Dodson R.J."/>
            <person name="Madupu R."/>
            <person name="Brinkac L.M."/>
            <person name="Daugherty S.C."/>
            <person name="DeBoy R.T."/>
            <person name="Durkin A.S."/>
            <person name="Gwinn M.L."/>
            <person name="Kolonay J.F."/>
            <person name="Sullivan S.A."/>
            <person name="Haft D.H."/>
            <person name="Selengut J."/>
            <person name="Davidsen T.M."/>
            <person name="Zafar N."/>
            <person name="White O."/>
            <person name="Tran B."/>
            <person name="Romero C."/>
            <person name="Forberger H.A."/>
            <person name="Weidman J.F."/>
            <person name="Khouri H.M."/>
            <person name="Feldblyum T.V."/>
            <person name="Utterback T.R."/>
            <person name="Van Aken S.E."/>
            <person name="Lovley D.R."/>
            <person name="Fraser C.M."/>
        </authorList>
    </citation>
    <scope>NUCLEOTIDE SEQUENCE [LARGE SCALE GENOMIC DNA]</scope>
    <source>
        <strain>ATCC 51573 / DSM 12127 / PCA</strain>
    </source>
</reference>
<protein>
    <recommendedName>
        <fullName evidence="1">DNA-directed RNA polymerase subunit alpha</fullName>
        <shortName evidence="1">RNAP subunit alpha</shortName>
        <ecNumber evidence="1">2.7.7.6</ecNumber>
    </recommendedName>
    <alternativeName>
        <fullName evidence="1">RNA polymerase subunit alpha</fullName>
    </alternativeName>
    <alternativeName>
        <fullName evidence="1">Transcriptase subunit alpha</fullName>
    </alternativeName>
</protein>
<evidence type="ECO:0000255" key="1">
    <source>
        <dbReference type="HAMAP-Rule" id="MF_00059"/>
    </source>
</evidence>
<dbReference type="EC" id="2.7.7.6" evidence="1"/>
<dbReference type="EMBL" id="AE017180">
    <property type="protein sequence ID" value="AAR36224.1"/>
    <property type="molecule type" value="Genomic_DNA"/>
</dbReference>
<dbReference type="RefSeq" id="NP_953874.1">
    <property type="nucleotide sequence ID" value="NC_002939.5"/>
</dbReference>
<dbReference type="RefSeq" id="WP_010943459.1">
    <property type="nucleotide sequence ID" value="NC_002939.5"/>
</dbReference>
<dbReference type="SMR" id="Q749B3"/>
<dbReference type="FunCoup" id="Q749B3">
    <property type="interactions" value="536"/>
</dbReference>
<dbReference type="STRING" id="243231.GSU2831"/>
<dbReference type="EnsemblBacteria" id="AAR36224">
    <property type="protein sequence ID" value="AAR36224"/>
    <property type="gene ID" value="GSU2831"/>
</dbReference>
<dbReference type="KEGG" id="gsu:GSU2831"/>
<dbReference type="PATRIC" id="fig|243231.5.peg.2856"/>
<dbReference type="eggNOG" id="COG0202">
    <property type="taxonomic scope" value="Bacteria"/>
</dbReference>
<dbReference type="HOGENOM" id="CLU_053084_0_1_7"/>
<dbReference type="InParanoid" id="Q749B3"/>
<dbReference type="OrthoDB" id="9805706at2"/>
<dbReference type="Proteomes" id="UP000000577">
    <property type="component" value="Chromosome"/>
</dbReference>
<dbReference type="GO" id="GO:0005737">
    <property type="term" value="C:cytoplasm"/>
    <property type="evidence" value="ECO:0000318"/>
    <property type="project" value="GO_Central"/>
</dbReference>
<dbReference type="GO" id="GO:0000428">
    <property type="term" value="C:DNA-directed RNA polymerase complex"/>
    <property type="evidence" value="ECO:0007669"/>
    <property type="project" value="UniProtKB-KW"/>
</dbReference>
<dbReference type="GO" id="GO:0003677">
    <property type="term" value="F:DNA binding"/>
    <property type="evidence" value="ECO:0007669"/>
    <property type="project" value="UniProtKB-UniRule"/>
</dbReference>
<dbReference type="GO" id="GO:0003899">
    <property type="term" value="F:DNA-directed RNA polymerase activity"/>
    <property type="evidence" value="ECO:0007669"/>
    <property type="project" value="UniProtKB-UniRule"/>
</dbReference>
<dbReference type="GO" id="GO:0046983">
    <property type="term" value="F:protein dimerization activity"/>
    <property type="evidence" value="ECO:0007669"/>
    <property type="project" value="InterPro"/>
</dbReference>
<dbReference type="GO" id="GO:0006351">
    <property type="term" value="P:DNA-templated transcription"/>
    <property type="evidence" value="ECO:0007669"/>
    <property type="project" value="UniProtKB-UniRule"/>
</dbReference>
<dbReference type="CDD" id="cd06928">
    <property type="entry name" value="RNAP_alpha_NTD"/>
    <property type="match status" value="1"/>
</dbReference>
<dbReference type="FunFam" id="1.10.150.20:FF:000001">
    <property type="entry name" value="DNA-directed RNA polymerase subunit alpha"/>
    <property type="match status" value="1"/>
</dbReference>
<dbReference type="FunFam" id="2.170.120.12:FF:000001">
    <property type="entry name" value="DNA-directed RNA polymerase subunit alpha"/>
    <property type="match status" value="1"/>
</dbReference>
<dbReference type="Gene3D" id="1.10.150.20">
    <property type="entry name" value="5' to 3' exonuclease, C-terminal subdomain"/>
    <property type="match status" value="1"/>
</dbReference>
<dbReference type="Gene3D" id="2.170.120.12">
    <property type="entry name" value="DNA-directed RNA polymerase, insert domain"/>
    <property type="match status" value="1"/>
</dbReference>
<dbReference type="Gene3D" id="3.30.1360.10">
    <property type="entry name" value="RNA polymerase, RBP11-like subunit"/>
    <property type="match status" value="1"/>
</dbReference>
<dbReference type="HAMAP" id="MF_00059">
    <property type="entry name" value="RNApol_bact_RpoA"/>
    <property type="match status" value="1"/>
</dbReference>
<dbReference type="InterPro" id="IPR011262">
    <property type="entry name" value="DNA-dir_RNA_pol_insert"/>
</dbReference>
<dbReference type="InterPro" id="IPR011263">
    <property type="entry name" value="DNA-dir_RNA_pol_RpoA/D/Rpb3"/>
</dbReference>
<dbReference type="InterPro" id="IPR011773">
    <property type="entry name" value="DNA-dir_RpoA"/>
</dbReference>
<dbReference type="InterPro" id="IPR036603">
    <property type="entry name" value="RBP11-like"/>
</dbReference>
<dbReference type="InterPro" id="IPR011260">
    <property type="entry name" value="RNAP_asu_C"/>
</dbReference>
<dbReference type="InterPro" id="IPR036643">
    <property type="entry name" value="RNApol_insert_sf"/>
</dbReference>
<dbReference type="NCBIfam" id="NF003513">
    <property type="entry name" value="PRK05182.1-2"/>
    <property type="match status" value="1"/>
</dbReference>
<dbReference type="NCBIfam" id="NF003515">
    <property type="entry name" value="PRK05182.2-1"/>
    <property type="match status" value="1"/>
</dbReference>
<dbReference type="NCBIfam" id="NF003519">
    <property type="entry name" value="PRK05182.2-5"/>
    <property type="match status" value="1"/>
</dbReference>
<dbReference type="NCBIfam" id="TIGR02027">
    <property type="entry name" value="rpoA"/>
    <property type="match status" value="1"/>
</dbReference>
<dbReference type="Pfam" id="PF01000">
    <property type="entry name" value="RNA_pol_A_bac"/>
    <property type="match status" value="1"/>
</dbReference>
<dbReference type="Pfam" id="PF03118">
    <property type="entry name" value="RNA_pol_A_CTD"/>
    <property type="match status" value="1"/>
</dbReference>
<dbReference type="Pfam" id="PF01193">
    <property type="entry name" value="RNA_pol_L"/>
    <property type="match status" value="1"/>
</dbReference>
<dbReference type="SMART" id="SM00662">
    <property type="entry name" value="RPOLD"/>
    <property type="match status" value="1"/>
</dbReference>
<dbReference type="SUPFAM" id="SSF47789">
    <property type="entry name" value="C-terminal domain of RNA polymerase alpha subunit"/>
    <property type="match status" value="1"/>
</dbReference>
<dbReference type="SUPFAM" id="SSF56553">
    <property type="entry name" value="Insert subdomain of RNA polymerase alpha subunit"/>
    <property type="match status" value="1"/>
</dbReference>
<dbReference type="SUPFAM" id="SSF55257">
    <property type="entry name" value="RBP11-like subunits of RNA polymerase"/>
    <property type="match status" value="1"/>
</dbReference>
<proteinExistence type="inferred from homology"/>
<sequence length="340" mass="37726">MYRNWRDLISPKKLQVESETLTNKYGKFYAEPFERGFGTTLGNSLRRVLLSSLQGAGITSVRIKGVLHEFSSIPGVTEDVTNIILNLKGVSLKMYGTEPKTVRIIHKGDGIITAGDIITDPQVEILNPEHHIATCSKDANLEMEMVVKVGKGYVPADRNRDEKAPVGTIPIDALFSPIRKVNFTVSNARVGQMTDYDKLTLEVWTNGSVIPEDAVAFAAKILKEQLSIFINFDEEAEPSGEAEVGEGESPINENLYRSVDELELSVRSANCLKNAGIKLIGELVSRTEAEMLKTQNFGRKSLNEIKDILAEMGLTLGMKLEGFPDPEVMRRLRGERKDEE</sequence>
<feature type="chain" id="PRO_0000175311" description="DNA-directed RNA polymerase subunit alpha">
    <location>
        <begin position="1"/>
        <end position="340"/>
    </location>
</feature>
<feature type="region of interest" description="Alpha N-terminal domain (alpha-NTD)" evidence="1">
    <location>
        <begin position="1"/>
        <end position="233"/>
    </location>
</feature>
<feature type="region of interest" description="Alpha C-terminal domain (alpha-CTD)" evidence="1">
    <location>
        <begin position="251"/>
        <end position="340"/>
    </location>
</feature>
<comment type="function">
    <text evidence="1">DNA-dependent RNA polymerase catalyzes the transcription of DNA into RNA using the four ribonucleoside triphosphates as substrates.</text>
</comment>
<comment type="catalytic activity">
    <reaction evidence="1">
        <text>RNA(n) + a ribonucleoside 5'-triphosphate = RNA(n+1) + diphosphate</text>
        <dbReference type="Rhea" id="RHEA:21248"/>
        <dbReference type="Rhea" id="RHEA-COMP:14527"/>
        <dbReference type="Rhea" id="RHEA-COMP:17342"/>
        <dbReference type="ChEBI" id="CHEBI:33019"/>
        <dbReference type="ChEBI" id="CHEBI:61557"/>
        <dbReference type="ChEBI" id="CHEBI:140395"/>
        <dbReference type="EC" id="2.7.7.6"/>
    </reaction>
</comment>
<comment type="subunit">
    <text evidence="1">Homodimer. The RNAP catalytic core consists of 2 alpha, 1 beta, 1 beta' and 1 omega subunit. When a sigma factor is associated with the core the holoenzyme is formed, which can initiate transcription.</text>
</comment>
<comment type="domain">
    <text evidence="1">The N-terminal domain is essential for RNAP assembly and basal transcription, whereas the C-terminal domain is involved in interaction with transcriptional regulators and with upstream promoter elements.</text>
</comment>
<comment type="similarity">
    <text evidence="1">Belongs to the RNA polymerase alpha chain family.</text>
</comment>
<gene>
    <name evidence="1" type="primary">rpoA</name>
    <name type="ordered locus">GSU2831</name>
</gene>
<keyword id="KW-0240">DNA-directed RNA polymerase</keyword>
<keyword id="KW-0548">Nucleotidyltransferase</keyword>
<keyword id="KW-1185">Reference proteome</keyword>
<keyword id="KW-0804">Transcription</keyword>
<keyword id="KW-0808">Transferase</keyword>
<accession>Q749B3</accession>
<organism>
    <name type="scientific">Geobacter sulfurreducens (strain ATCC 51573 / DSM 12127 / PCA)</name>
    <dbReference type="NCBI Taxonomy" id="243231"/>
    <lineage>
        <taxon>Bacteria</taxon>
        <taxon>Pseudomonadati</taxon>
        <taxon>Thermodesulfobacteriota</taxon>
        <taxon>Desulfuromonadia</taxon>
        <taxon>Geobacterales</taxon>
        <taxon>Geobacteraceae</taxon>
        <taxon>Geobacter</taxon>
    </lineage>
</organism>
<name>RPOA_GEOSL</name>